<keyword id="KW-0413">Isomerase</keyword>
<keyword id="KW-0479">Metal-binding</keyword>
<keyword id="KW-1185">Reference proteome</keyword>
<keyword id="KW-0862">Zinc</keyword>
<organism>
    <name type="scientific">Opitutus terrae (strain DSM 11246 / JCM 15787 / PB90-1)</name>
    <dbReference type="NCBI Taxonomy" id="452637"/>
    <lineage>
        <taxon>Bacteria</taxon>
        <taxon>Pseudomonadati</taxon>
        <taxon>Verrucomicrobiota</taxon>
        <taxon>Opitutia</taxon>
        <taxon>Opitutales</taxon>
        <taxon>Opitutaceae</taxon>
        <taxon>Opitutus</taxon>
    </lineage>
</organism>
<dbReference type="EC" id="5.3.1.17"/>
<dbReference type="EMBL" id="CP001032">
    <property type="protein sequence ID" value="ACB77536.1"/>
    <property type="molecule type" value="Genomic_DNA"/>
</dbReference>
<dbReference type="RefSeq" id="WP_012377064.1">
    <property type="nucleotide sequence ID" value="NC_010571.1"/>
</dbReference>
<dbReference type="SMR" id="B1ZP50"/>
<dbReference type="STRING" id="452637.Oter_4263"/>
<dbReference type="KEGG" id="ote:Oter_4263"/>
<dbReference type="eggNOG" id="COG3717">
    <property type="taxonomic scope" value="Bacteria"/>
</dbReference>
<dbReference type="HOGENOM" id="CLU_062609_0_0_0"/>
<dbReference type="OrthoDB" id="9770644at2"/>
<dbReference type="UniPathway" id="UPA00545">
    <property type="reaction ID" value="UER00826"/>
</dbReference>
<dbReference type="Proteomes" id="UP000007013">
    <property type="component" value="Chromosome"/>
</dbReference>
<dbReference type="GO" id="GO:0008697">
    <property type="term" value="F:4-deoxy-L-threo-5-hexosulose-uronate ketol-isomerase activity"/>
    <property type="evidence" value="ECO:0007669"/>
    <property type="project" value="UniProtKB-UniRule"/>
</dbReference>
<dbReference type="GO" id="GO:0008270">
    <property type="term" value="F:zinc ion binding"/>
    <property type="evidence" value="ECO:0007669"/>
    <property type="project" value="UniProtKB-UniRule"/>
</dbReference>
<dbReference type="GO" id="GO:0019698">
    <property type="term" value="P:D-galacturonate catabolic process"/>
    <property type="evidence" value="ECO:0007669"/>
    <property type="project" value="TreeGrafter"/>
</dbReference>
<dbReference type="GO" id="GO:0042840">
    <property type="term" value="P:D-glucuronate catabolic process"/>
    <property type="evidence" value="ECO:0007669"/>
    <property type="project" value="TreeGrafter"/>
</dbReference>
<dbReference type="GO" id="GO:0045490">
    <property type="term" value="P:pectin catabolic process"/>
    <property type="evidence" value="ECO:0007669"/>
    <property type="project" value="UniProtKB-UniRule"/>
</dbReference>
<dbReference type="CDD" id="cd20491">
    <property type="entry name" value="cupin_KduI_C"/>
    <property type="match status" value="1"/>
</dbReference>
<dbReference type="CDD" id="cd20294">
    <property type="entry name" value="cupin_KduI_N"/>
    <property type="match status" value="1"/>
</dbReference>
<dbReference type="Gene3D" id="2.60.120.10">
    <property type="entry name" value="Jelly Rolls"/>
    <property type="match status" value="1"/>
</dbReference>
<dbReference type="Gene3D" id="2.60.120.520">
    <property type="entry name" value="pectin degrading enzyme 5-keto 4- deoxyuronate isomerase, domain 1"/>
    <property type="match status" value="1"/>
</dbReference>
<dbReference type="InterPro" id="IPR007045">
    <property type="entry name" value="KduI"/>
</dbReference>
<dbReference type="InterPro" id="IPR021120">
    <property type="entry name" value="KduI/IolB_isomerase"/>
</dbReference>
<dbReference type="InterPro" id="IPR027449">
    <property type="entry name" value="KduI_N"/>
</dbReference>
<dbReference type="InterPro" id="IPR014710">
    <property type="entry name" value="RmlC-like_jellyroll"/>
</dbReference>
<dbReference type="InterPro" id="IPR011051">
    <property type="entry name" value="RmlC_Cupin_sf"/>
</dbReference>
<dbReference type="NCBIfam" id="NF002091">
    <property type="entry name" value="PRK00924.1"/>
    <property type="match status" value="1"/>
</dbReference>
<dbReference type="PANTHER" id="PTHR38461">
    <property type="entry name" value="4-DEOXY-L-THREO-5-HEXOSULOSE-URONATE KETOL-ISOMERASE"/>
    <property type="match status" value="1"/>
</dbReference>
<dbReference type="PANTHER" id="PTHR38461:SF1">
    <property type="entry name" value="4-DEOXY-L-THREO-5-HEXOSULOSE-URONATE KETOL-ISOMERASE"/>
    <property type="match status" value="1"/>
</dbReference>
<dbReference type="Pfam" id="PF04962">
    <property type="entry name" value="KduI"/>
    <property type="match status" value="1"/>
</dbReference>
<dbReference type="SUPFAM" id="SSF51182">
    <property type="entry name" value="RmlC-like cupins"/>
    <property type="match status" value="1"/>
</dbReference>
<protein>
    <recommendedName>
        <fullName>4-deoxy-L-threo-5-hexosulose-uronate ketol-isomerase</fullName>
        <ecNumber>5.3.1.17</ecNumber>
    </recommendedName>
    <alternativeName>
        <fullName>5-keto-4-deoxyuronate isomerase</fullName>
    </alternativeName>
    <alternativeName>
        <fullName>DKI isomerase</fullName>
    </alternativeName>
</protein>
<proteinExistence type="inferred from homology"/>
<comment type="function">
    <text evidence="1">Catalyzes the isomerization of 5-dehydro-4-deoxy-D-glucuronate to 3-deoxy-D-glycero-2,5-hexodiulosonate.</text>
</comment>
<comment type="catalytic activity">
    <reaction>
        <text>5-dehydro-4-deoxy-D-glucuronate = 3-deoxy-D-glycero-2,5-hexodiulosonate</text>
        <dbReference type="Rhea" id="RHEA:23896"/>
        <dbReference type="ChEBI" id="CHEBI:17117"/>
        <dbReference type="ChEBI" id="CHEBI:29071"/>
        <dbReference type="EC" id="5.3.1.17"/>
    </reaction>
</comment>
<comment type="cofactor">
    <cofactor evidence="1">
        <name>Zn(2+)</name>
        <dbReference type="ChEBI" id="CHEBI:29105"/>
    </cofactor>
    <text evidence="1">Binds 1 zinc ion per subunit.</text>
</comment>
<comment type="pathway">
    <text>Glycan metabolism; pectin degradation; 2-dehydro-3-deoxy-D-gluconate from pectin: step 4/5.</text>
</comment>
<comment type="similarity">
    <text evidence="2">Belongs to the KduI family.</text>
</comment>
<name>KDUI_OPITP</name>
<accession>B1ZP50</accession>
<evidence type="ECO:0000250" key="1"/>
<evidence type="ECO:0000305" key="2"/>
<sequence length="274" mass="30220">MKLHYSPSPAETKRLEPEQLRSAFLISDLFQPGQLITHYTDLDRMIAGGVTPTSAPLPLPNSKQATGTDFFLERREIGIINIGAPGAVRVGGKSYPLGSLDCLYVGKGERDVVFEAGSAGQAQYFFISTPAHMTYPTAHAARAQGTQPIGDPAKCNRRRINRYIHANGIKSCQLVMGFTEFEPGSVWNTMPPHTHSRRTEIYLYFDLGTDMVVHLMGEPQATRHLIVRDREAILSPAWSIHAGVGTGAYRFIWAMGGDNQTFEDMDQVAIADLK</sequence>
<feature type="chain" id="PRO_1000147780" description="4-deoxy-L-threo-5-hexosulose-uronate ketol-isomerase">
    <location>
        <begin position="1"/>
        <end position="274"/>
    </location>
</feature>
<feature type="binding site" evidence="1">
    <location>
        <position position="193"/>
    </location>
    <ligand>
        <name>Zn(2+)</name>
        <dbReference type="ChEBI" id="CHEBI:29105"/>
    </ligand>
</feature>
<feature type="binding site" evidence="1">
    <location>
        <position position="195"/>
    </location>
    <ligand>
        <name>Zn(2+)</name>
        <dbReference type="ChEBI" id="CHEBI:29105"/>
    </ligand>
</feature>
<feature type="binding site" evidence="1">
    <location>
        <position position="200"/>
    </location>
    <ligand>
        <name>Zn(2+)</name>
        <dbReference type="ChEBI" id="CHEBI:29105"/>
    </ligand>
</feature>
<feature type="binding site" evidence="1">
    <location>
        <position position="241"/>
    </location>
    <ligand>
        <name>Zn(2+)</name>
        <dbReference type="ChEBI" id="CHEBI:29105"/>
    </ligand>
</feature>
<reference key="1">
    <citation type="journal article" date="2011" name="J. Bacteriol.">
        <title>Genome sequence of the verrucomicrobium Opitutus terrae PB90-1, an abundant inhabitant of rice paddy soil ecosystems.</title>
        <authorList>
            <person name="van Passel M.W."/>
            <person name="Kant R."/>
            <person name="Palva A."/>
            <person name="Copeland A."/>
            <person name="Lucas S."/>
            <person name="Lapidus A."/>
            <person name="Glavina del Rio T."/>
            <person name="Pitluck S."/>
            <person name="Goltsman E."/>
            <person name="Clum A."/>
            <person name="Sun H."/>
            <person name="Schmutz J."/>
            <person name="Larimer F.W."/>
            <person name="Land M.L."/>
            <person name="Hauser L."/>
            <person name="Kyrpides N."/>
            <person name="Mikhailova N."/>
            <person name="Richardson P.P."/>
            <person name="Janssen P.H."/>
            <person name="de Vos W.M."/>
            <person name="Smidt H."/>
        </authorList>
    </citation>
    <scope>NUCLEOTIDE SEQUENCE [LARGE SCALE GENOMIC DNA]</scope>
    <source>
        <strain>DSM 11246 / JCM 15787 / PB90-1</strain>
    </source>
</reference>
<gene>
    <name type="primary">kduI</name>
    <name type="ordered locus">Oter_4263</name>
</gene>